<reference key="1">
    <citation type="journal article" date="2004" name="Plant Physiol.">
        <title>Genome-wide ORFeome cloning and analysis of Arabidopsis transcription factor genes.</title>
        <authorList>
            <person name="Gong W."/>
            <person name="Shen Y.-P."/>
            <person name="Ma L.-G."/>
            <person name="Pan Y."/>
            <person name="Du Y.-L."/>
            <person name="Wang D.-H."/>
            <person name="Yang J.-Y."/>
            <person name="Hu L.-D."/>
            <person name="Liu X.-F."/>
            <person name="Dong C.-X."/>
            <person name="Ma L."/>
            <person name="Chen Y.-H."/>
            <person name="Yang X.-Y."/>
            <person name="Gao Y."/>
            <person name="Zhu D."/>
            <person name="Tan X."/>
            <person name="Mu J.-Y."/>
            <person name="Zhang D.-B."/>
            <person name="Liu Y.-L."/>
            <person name="Dinesh-Kumar S.P."/>
            <person name="Li Y."/>
            <person name="Wang X.-P."/>
            <person name="Gu H.-Y."/>
            <person name="Qu L.-J."/>
            <person name="Bai S.-N."/>
            <person name="Lu Y.-T."/>
            <person name="Li J.-Y."/>
            <person name="Zhao J.-D."/>
            <person name="Zuo J."/>
            <person name="Huang H."/>
            <person name="Deng X.-W."/>
            <person name="Zhu Y.-X."/>
        </authorList>
    </citation>
    <scope>NUCLEOTIDE SEQUENCE [MRNA]</scope>
</reference>
<reference key="2">
    <citation type="submission" date="2004-01" db="EMBL/GenBank/DDBJ databases">
        <title>INDETERMINATE1-like genes in Arabidopsis.</title>
        <authorList>
            <person name="Dewald M."/>
            <person name="Fritz J."/>
            <person name="Merkle T."/>
        </authorList>
    </citation>
    <scope>NUCLEOTIDE SEQUENCE [MRNA]</scope>
</reference>
<reference key="3">
    <citation type="journal article" date="1997" name="DNA Res.">
        <title>Structural analysis of Arabidopsis thaliana chromosome 5. I. Sequence features of the 1.6 Mb regions covered by twenty physically assigned P1 clones.</title>
        <authorList>
            <person name="Sato S."/>
            <person name="Kotani H."/>
            <person name="Nakamura Y."/>
            <person name="Kaneko T."/>
            <person name="Asamizu E."/>
            <person name="Fukami M."/>
            <person name="Miyajima N."/>
            <person name="Tabata S."/>
        </authorList>
    </citation>
    <scope>NUCLEOTIDE SEQUENCE [LARGE SCALE GENOMIC DNA]</scope>
    <source>
        <strain>cv. Columbia</strain>
    </source>
</reference>
<reference key="4">
    <citation type="journal article" date="2000" name="Nature">
        <title>Sequence and analysis of chromosome 5 of the plant Arabidopsis thaliana.</title>
        <authorList>
            <person name="Tabata S."/>
            <person name="Kaneko T."/>
            <person name="Nakamura Y."/>
            <person name="Kotani H."/>
            <person name="Kato T."/>
            <person name="Asamizu E."/>
            <person name="Miyajima N."/>
            <person name="Sasamoto S."/>
            <person name="Kimura T."/>
            <person name="Hosouchi T."/>
            <person name="Kawashima K."/>
            <person name="Kohara M."/>
            <person name="Matsumoto M."/>
            <person name="Matsuno A."/>
            <person name="Muraki A."/>
            <person name="Nakayama S."/>
            <person name="Nakazaki N."/>
            <person name="Naruo K."/>
            <person name="Okumura S."/>
            <person name="Shinpo S."/>
            <person name="Takeuchi C."/>
            <person name="Wada T."/>
            <person name="Watanabe A."/>
            <person name="Yamada M."/>
            <person name="Yasuda M."/>
            <person name="Sato S."/>
            <person name="de la Bastide M."/>
            <person name="Huang E."/>
            <person name="Spiegel L."/>
            <person name="Gnoj L."/>
            <person name="O'Shaughnessy A."/>
            <person name="Preston R."/>
            <person name="Habermann K."/>
            <person name="Murray J."/>
            <person name="Johnson D."/>
            <person name="Rohlfing T."/>
            <person name="Nelson J."/>
            <person name="Stoneking T."/>
            <person name="Pepin K."/>
            <person name="Spieth J."/>
            <person name="Sekhon M."/>
            <person name="Armstrong J."/>
            <person name="Becker M."/>
            <person name="Belter E."/>
            <person name="Cordum H."/>
            <person name="Cordes M."/>
            <person name="Courtney L."/>
            <person name="Courtney W."/>
            <person name="Dante M."/>
            <person name="Du H."/>
            <person name="Edwards J."/>
            <person name="Fryman J."/>
            <person name="Haakensen B."/>
            <person name="Lamar E."/>
            <person name="Latreille P."/>
            <person name="Leonard S."/>
            <person name="Meyer R."/>
            <person name="Mulvaney E."/>
            <person name="Ozersky P."/>
            <person name="Riley A."/>
            <person name="Strowmatt C."/>
            <person name="Wagner-McPherson C."/>
            <person name="Wollam A."/>
            <person name="Yoakum M."/>
            <person name="Bell M."/>
            <person name="Dedhia N."/>
            <person name="Parnell L."/>
            <person name="Shah R."/>
            <person name="Rodriguez M."/>
            <person name="Hoon See L."/>
            <person name="Vil D."/>
            <person name="Baker J."/>
            <person name="Kirchoff K."/>
            <person name="Toth K."/>
            <person name="King L."/>
            <person name="Bahret A."/>
            <person name="Miller B."/>
            <person name="Marra M.A."/>
            <person name="Martienssen R."/>
            <person name="McCombie W.R."/>
            <person name="Wilson R.K."/>
            <person name="Murphy G."/>
            <person name="Bancroft I."/>
            <person name="Volckaert G."/>
            <person name="Wambutt R."/>
            <person name="Duesterhoeft A."/>
            <person name="Stiekema W."/>
            <person name="Pohl T."/>
            <person name="Entian K.-D."/>
            <person name="Terryn N."/>
            <person name="Hartley N."/>
            <person name="Bent E."/>
            <person name="Johnson S."/>
            <person name="Langham S.-A."/>
            <person name="McCullagh B."/>
            <person name="Robben J."/>
            <person name="Grymonprez B."/>
            <person name="Zimmermann W."/>
            <person name="Ramsperger U."/>
            <person name="Wedler H."/>
            <person name="Balke K."/>
            <person name="Wedler E."/>
            <person name="Peters S."/>
            <person name="van Staveren M."/>
            <person name="Dirkse W."/>
            <person name="Mooijman P."/>
            <person name="Klein Lankhorst R."/>
            <person name="Weitzenegger T."/>
            <person name="Bothe G."/>
            <person name="Rose M."/>
            <person name="Hauf J."/>
            <person name="Berneiser S."/>
            <person name="Hempel S."/>
            <person name="Feldpausch M."/>
            <person name="Lamberth S."/>
            <person name="Villarroel R."/>
            <person name="Gielen J."/>
            <person name="Ardiles W."/>
            <person name="Bents O."/>
            <person name="Lemcke K."/>
            <person name="Kolesov G."/>
            <person name="Mayer K.F.X."/>
            <person name="Rudd S."/>
            <person name="Schoof H."/>
            <person name="Schueller C."/>
            <person name="Zaccaria P."/>
            <person name="Mewes H.-W."/>
            <person name="Bevan M."/>
            <person name="Fransz P.F."/>
        </authorList>
    </citation>
    <scope>NUCLEOTIDE SEQUENCE [LARGE SCALE GENOMIC DNA]</scope>
    <source>
        <strain>cv. Columbia</strain>
    </source>
</reference>
<reference key="5">
    <citation type="journal article" date="2017" name="Plant J.">
        <title>Araport11: a complete reannotation of the Arabidopsis thaliana reference genome.</title>
        <authorList>
            <person name="Cheng C.Y."/>
            <person name="Krishnakumar V."/>
            <person name="Chan A.P."/>
            <person name="Thibaud-Nissen F."/>
            <person name="Schobel S."/>
            <person name="Town C.D."/>
        </authorList>
    </citation>
    <scope>GENOME REANNOTATION</scope>
    <source>
        <strain>cv. Columbia</strain>
    </source>
</reference>
<reference key="6">
    <citation type="submission" date="2006-07" db="EMBL/GenBank/DDBJ databases">
        <title>Large-scale analysis of RIKEN Arabidopsis full-length (RAFL) cDNAs.</title>
        <authorList>
            <person name="Totoki Y."/>
            <person name="Seki M."/>
            <person name="Ishida J."/>
            <person name="Nakajima M."/>
            <person name="Enju A."/>
            <person name="Kamiya A."/>
            <person name="Narusaka M."/>
            <person name="Shin-i T."/>
            <person name="Nakagawa M."/>
            <person name="Sakamoto N."/>
            <person name="Oishi K."/>
            <person name="Kohara Y."/>
            <person name="Kobayashi M."/>
            <person name="Toyoda A."/>
            <person name="Sakaki Y."/>
            <person name="Sakurai T."/>
            <person name="Iida K."/>
            <person name="Akiyama K."/>
            <person name="Satou M."/>
            <person name="Toyoda T."/>
            <person name="Konagaya A."/>
            <person name="Carninci P."/>
            <person name="Kawai J."/>
            <person name="Hayashizaki Y."/>
            <person name="Shinozaki K."/>
        </authorList>
    </citation>
    <scope>NUCLEOTIDE SEQUENCE [LARGE SCALE MRNA] OF 7-503</scope>
    <source>
        <strain>cv. Columbia</strain>
    </source>
</reference>
<reference key="7">
    <citation type="journal article" date="2006" name="BMC Genomics">
        <title>The maize INDETERMINATE1 flowering time regulator defines a highly conserved zinc finger protein family in higher plants.</title>
        <authorList>
            <person name="Colasanti J."/>
            <person name="Tremblay R."/>
            <person name="Wong A.Y."/>
            <person name="Coneva V."/>
            <person name="Kozaki A."/>
            <person name="Mable B.K."/>
        </authorList>
    </citation>
    <scope>GENE FAMILY</scope>
    <scope>NOMENCLATURE</scope>
</reference>
<reference key="8">
    <citation type="journal article" date="2007" name="Genes Dev.">
        <title>Arabidopsis JACKDAW and MAGPIE zinc finger proteins delimit asymmetric cell division and stabilize tissue boundaries by restricting SHORT-ROOT action.</title>
        <authorList>
            <person name="Welch D."/>
            <person name="Hassan H."/>
            <person name="Blilou I."/>
            <person name="Immink R."/>
            <person name="Heidstra R."/>
            <person name="Scheres B."/>
        </authorList>
    </citation>
    <scope>FUNCTION</scope>
    <scope>TISSUE SPECIFICITY</scope>
    <scope>DEVELOPMENTAL STAGE</scope>
    <scope>SUBCELLULAR LOCATION</scope>
    <scope>INTERACTION WITH SHR; SCR; MGP AND ITSELF</scope>
</reference>
<reference key="9">
    <citation type="journal article" date="2010" name="Development">
        <title>JACKDAW controls epidermal patterning in the Arabidopsis root meristem through a non-cell-autonomous mechanism.</title>
        <authorList>
            <person name="Hassan H."/>
            <person name="Scheres B."/>
            <person name="Blilou I."/>
        </authorList>
    </citation>
    <scope>FUNCTION</scope>
</reference>
<reference key="10">
    <citation type="journal article" date="2011" name="Curr. Biol.">
        <title>An essential protein that interacts with endosomes and promotes movement of the SHORT-ROOT transcription factor.</title>
        <authorList>
            <person name="Koizumi K."/>
            <person name="Wu S."/>
            <person name="MacRae-Crerar A."/>
            <person name="Gallagher K.L."/>
        </authorList>
    </citation>
    <scope>INTERACTION WITH SIEL</scope>
</reference>
<reference key="11">
    <citation type="journal article" date="2011" name="Plant Mol. Biol.">
        <title>Activity of transcription factor JACKDAW is essential for SHR/SCR-dependent activation of SCARECROW and MAGPIE and is modulated by reciprocal interactions with MAGPIE, SCARECROW and SHORT ROOT.</title>
        <authorList>
            <person name="Ogasawara H."/>
            <person name="Kaimi R."/>
            <person name="Colasanti J."/>
            <person name="Kozaki A."/>
        </authorList>
    </citation>
    <scope>FUNCTION</scope>
    <scope>INDUCTION</scope>
</reference>
<reference key="12">
    <citation type="journal article" date="2014" name="Proc. Natl. Acad. Sci. U.S.A.">
        <title>DELLA protein functions as a transcriptional activator through the DNA binding of the indeterminate domain family proteins.</title>
        <authorList>
            <person name="Yoshida H."/>
            <person name="Hirano K."/>
            <person name="Sato T."/>
            <person name="Mitsuda N."/>
            <person name="Nomoto M."/>
            <person name="Maeo K."/>
            <person name="Koketsu E."/>
            <person name="Mitani R."/>
            <person name="Kawamura M."/>
            <person name="Ishiguro S."/>
            <person name="Tada Y."/>
            <person name="Ohme-Takagi M."/>
            <person name="Matsuoka M."/>
            <person name="Ueguchi-Tanaka M."/>
        </authorList>
    </citation>
    <scope>FUNCTION</scope>
    <scope>INTERACTION WITH RGA AND SCL3</scope>
</reference>
<reference key="13">
    <citation type="journal article" date="2015" name="Plant Cell">
        <title>Arabidopsis BIRD zinc finger proteins jointly stabilize tissue boundaries by confining the cell fate regulator SHORT-ROOT and contributing to fate specification.</title>
        <authorList>
            <person name="Long Y."/>
            <person name="Smet W."/>
            <person name="Cruz-Ramirez A."/>
            <person name="Castelijns B."/>
            <person name="de Jonge W."/>
            <person name="Maehoenen A.P."/>
            <person name="Bouchet B.P."/>
            <person name="Perez G.S."/>
            <person name="Akhmanova A."/>
            <person name="Scheres B."/>
            <person name="Blilou I."/>
        </authorList>
    </citation>
    <scope>FUNCTION</scope>
    <scope>DISRUPTION PHENOTYPE</scope>
    <scope>SUBCELLULAR LOCATION</scope>
    <source>
        <strain>cv. Columbia</strain>
    </source>
</reference>
<reference key="14">
    <citation type="journal article" date="2017" name="Nat. Plants">
        <title>Structure of the SHR-SCR heterodimer bound to the BIRD/IDD transcriptional factor JKD.</title>
        <authorList>
            <person name="Hirano Y."/>
            <person name="Nakagawa M."/>
            <person name="Suyama T."/>
            <person name="Murase K."/>
            <person name="Shirakawa M."/>
            <person name="Takayama S."/>
            <person name="Sun T.-P."/>
            <person name="Hakoshima T."/>
        </authorList>
    </citation>
    <scope>X-RAY CRYSTALLOGRAPHY (2.70 ANGSTROMS) OF 155-224 IN COMPLEX WITH ZINC; SCR AND SHR</scope>
    <scope>INTERACTION WITH SCR AND SHR</scope>
    <scope>DNA BINDING</scope>
</reference>
<organism>
    <name type="scientific">Arabidopsis thaliana</name>
    <name type="common">Mouse-ear cress</name>
    <dbReference type="NCBI Taxonomy" id="3702"/>
    <lineage>
        <taxon>Eukaryota</taxon>
        <taxon>Viridiplantae</taxon>
        <taxon>Streptophyta</taxon>
        <taxon>Embryophyta</taxon>
        <taxon>Tracheophyta</taxon>
        <taxon>Spermatophyta</taxon>
        <taxon>Magnoliopsida</taxon>
        <taxon>eudicotyledons</taxon>
        <taxon>Gunneridae</taxon>
        <taxon>Pentapetalae</taxon>
        <taxon>rosids</taxon>
        <taxon>malvids</taxon>
        <taxon>Brassicales</taxon>
        <taxon>Brassicaceae</taxon>
        <taxon>Camelineae</taxon>
        <taxon>Arabidopsis</taxon>
    </lineage>
</organism>
<name>IDD10_ARATH</name>
<keyword id="KW-0002">3D-structure</keyword>
<keyword id="KW-0010">Activator</keyword>
<keyword id="KW-0238">DNA-binding</keyword>
<keyword id="KW-0479">Metal-binding</keyword>
<keyword id="KW-0539">Nucleus</keyword>
<keyword id="KW-0597">Phosphoprotein</keyword>
<keyword id="KW-1185">Reference proteome</keyword>
<keyword id="KW-0677">Repeat</keyword>
<keyword id="KW-0804">Transcription</keyword>
<keyword id="KW-0805">Transcription regulation</keyword>
<keyword id="KW-0862">Zinc</keyword>
<keyword id="KW-0863">Zinc-finger</keyword>
<proteinExistence type="evidence at protein level"/>
<gene>
    <name evidence="13" type="primary">JKD</name>
    <name evidence="12" type="synonym">IDD10</name>
    <name evidence="14" type="synonym">IDZ3</name>
    <name evidence="16" type="ordered locus">At5g03150</name>
    <name evidence="18" type="ORF">F15A17.180</name>
    <name evidence="17" type="ORF">MOK16.6</name>
</gene>
<feature type="chain" id="PRO_0000337840" description="Zinc finger protein JACKDAW">
    <location>
        <begin position="1"/>
        <end position="503"/>
    </location>
</feature>
<feature type="zinc finger region" description="C2H2-type 1" evidence="2">
    <location>
        <begin position="82"/>
        <end position="104"/>
    </location>
</feature>
<feature type="zinc finger region" description="C2H2-type 2" evidence="15">
    <location>
        <begin position="124"/>
        <end position="154"/>
    </location>
</feature>
<feature type="zinc finger region" description="C2H2-type 2; degenerate" evidence="2">
    <location>
        <begin position="159"/>
        <end position="182"/>
    </location>
</feature>
<feature type="zinc finger region" description="CCHC-type 2; atypical" evidence="15">
    <location>
        <begin position="186"/>
        <end position="209"/>
    </location>
</feature>
<feature type="region of interest" description="Disordered" evidence="4">
    <location>
        <begin position="32"/>
        <end position="68"/>
    </location>
</feature>
<feature type="region of interest" description="SHR-binding" evidence="11">
    <location>
        <begin position="196"/>
        <end position="208"/>
    </location>
</feature>
<feature type="region of interest" description="Disordered" evidence="4">
    <location>
        <begin position="301"/>
        <end position="417"/>
    </location>
</feature>
<feature type="region of interest" description="Disordered" evidence="4">
    <location>
        <begin position="432"/>
        <end position="465"/>
    </location>
</feature>
<feature type="short sequence motif" description="Nuclear localization signal 1" evidence="3">
    <location>
        <begin position="100"/>
        <end position="107"/>
    </location>
</feature>
<feature type="short sequence motif" description="Nuclear localization signal 2" evidence="3">
    <location>
        <begin position="146"/>
        <end position="153"/>
    </location>
</feature>
<feature type="compositionally biased region" description="Low complexity" evidence="4">
    <location>
        <begin position="32"/>
        <end position="51"/>
    </location>
</feature>
<feature type="compositionally biased region" description="Low complexity" evidence="4">
    <location>
        <begin position="319"/>
        <end position="358"/>
    </location>
</feature>
<feature type="compositionally biased region" description="Polar residues" evidence="4">
    <location>
        <begin position="381"/>
        <end position="392"/>
    </location>
</feature>
<feature type="compositionally biased region" description="Low complexity" evidence="4">
    <location>
        <begin position="396"/>
        <end position="407"/>
    </location>
</feature>
<feature type="compositionally biased region" description="Polar residues" evidence="4">
    <location>
        <begin position="444"/>
        <end position="465"/>
    </location>
</feature>
<feature type="binding site" evidence="11 19">
    <location>
        <position position="161"/>
    </location>
    <ligand>
        <name>Zn(2+)</name>
        <dbReference type="ChEBI" id="CHEBI:29105"/>
        <label>1</label>
    </ligand>
</feature>
<feature type="binding site" evidence="11 19">
    <location>
        <position position="164"/>
    </location>
    <ligand>
        <name>Zn(2+)</name>
        <dbReference type="ChEBI" id="CHEBI:29105"/>
        <label>1</label>
    </ligand>
</feature>
<feature type="binding site" evidence="11 19">
    <location>
        <position position="177"/>
    </location>
    <ligand>
        <name>Zn(2+)</name>
        <dbReference type="ChEBI" id="CHEBI:29105"/>
        <label>1</label>
    </ligand>
</feature>
<feature type="binding site" evidence="11 19">
    <location>
        <position position="181"/>
    </location>
    <ligand>
        <name>Zn(2+)</name>
        <dbReference type="ChEBI" id="CHEBI:29105"/>
        <label>1</label>
    </ligand>
</feature>
<feature type="binding site" evidence="11 19">
    <location>
        <position position="188"/>
    </location>
    <ligand>
        <name>Zn(2+)</name>
        <dbReference type="ChEBI" id="CHEBI:29105"/>
        <label>2</label>
    </ligand>
</feature>
<feature type="binding site" evidence="11 19">
    <location>
        <position position="190"/>
    </location>
    <ligand>
        <name>Zn(2+)</name>
        <dbReference type="ChEBI" id="CHEBI:29105"/>
        <label>2</label>
    </ligand>
</feature>
<feature type="binding site" evidence="11 19">
    <location>
        <position position="203"/>
    </location>
    <ligand>
        <name>Zn(2+)</name>
        <dbReference type="ChEBI" id="CHEBI:29105"/>
        <label>2</label>
    </ligand>
</feature>
<feature type="binding site" evidence="11 19">
    <location>
        <position position="207"/>
    </location>
    <ligand>
        <name>Zn(2+)</name>
        <dbReference type="ChEBI" id="CHEBI:29105"/>
        <label>2</label>
    </ligand>
</feature>
<feature type="modified residue" description="Phosphoserine" evidence="1">
    <location>
        <position position="72"/>
    </location>
</feature>
<feature type="sequence conflict" description="In Ref. 6; BAF00785." evidence="15" ref="6">
    <original>H</original>
    <variation>R</variation>
    <location>
        <position position="435"/>
    </location>
</feature>
<feature type="strand" evidence="20">
    <location>
        <begin position="162"/>
        <end position="164"/>
    </location>
</feature>
<feature type="strand" evidence="20">
    <location>
        <begin position="167"/>
        <end position="170"/>
    </location>
</feature>
<feature type="helix" evidence="20">
    <location>
        <begin position="171"/>
        <end position="180"/>
    </location>
</feature>
<feature type="strand" evidence="20">
    <location>
        <begin position="184"/>
        <end position="187"/>
    </location>
</feature>
<feature type="strand" evidence="20">
    <location>
        <begin position="193"/>
        <end position="195"/>
    </location>
</feature>
<feature type="helix" evidence="20">
    <location>
        <begin position="197"/>
        <end position="206"/>
    </location>
</feature>
<feature type="helix" evidence="21">
    <location>
        <begin position="371"/>
        <end position="381"/>
    </location>
</feature>
<sequence length="503" mass="55201">MQMIPGDPFSISSSMGGFVHQETHLHHLQQQIPDLNPNSNPNPNAKPNSSSAKKKRNQPGTPDPDADVIALSPTTLMATNRFVCEICNKGFQRDQNLQLHRRGHNLPWKLKQRSKQEVIKKKVYICPIKTCVHHDASRALGDLTGIKKHYSRKHGEKKWKCEKCSKKYAVQSDWKAHAKTCGTREYKCDCGTLFSRKDSFITHRAFCDALTEEGARMSSLSNNNPVISTTNLNFGNESNVMNNPNLPHGFVHRGVHHPDINAAISQFGLGFGHDLSAMHAQGLSEMVQMASTGNHHLFPSSSSSLPDFSGHHQFQIPMTSTNPSLTLSSSSTSQQTSASLQHQTLKDSSFSPLFSSSSENKQNKPLSPMSATALLQKAAQMGSTRSNSSTAPSFFAGPTMTSSSATASPPPRSSSPMMIQQQLNNFNTNVLRENHNRAPPPLSGVSTSSVDNNPFQSNRSGLNPAQQMGLTRDFLGVSNEHHPHQTGRRPFLPQELARFAPLG</sequence>
<accession>Q700D2</accession>
<accession>Q0WQ14</accession>
<accession>Q9FYN0</accession>
<accession>Q9LYX0</accession>
<protein>
    <recommendedName>
        <fullName evidence="13">Zinc finger protein JACKDAW</fullName>
    </recommendedName>
    <alternativeName>
        <fullName evidence="14">ID1-like zinc finger protein 3</fullName>
    </alternativeName>
    <alternativeName>
        <fullName evidence="12">Protein indeterminate-domain 10</fullName>
    </alternativeName>
</protein>
<comment type="function">
    <text evidence="5 6 8 9 10 11">Transcription factor that, together with BIB, regulates tissue boundaries and asymmetric cell division by a rapid up-regulation of 'SCARECROW' (SCR), thus controlling the nuclear localization of 'SHORT-ROOT' (SHR) and restricting its action (PubMed:17785527, PubMed:25829440). Binds DNA via its zinc fingers (PubMed:24821766, PubMed:28211915). Recognizes and binds to SCL3 promoter sequence 5'-AGACAA-3' to promote its expression when in complex with RGA (PubMed:24821766). Confines CYCD6 expression to the cortex-endodermis initial/daughter (CEI/CEID) tissues (PubMed:25829440). Required for radial patterning and stem cell maintenance (PubMed:17785527). Counteracted by 'MAGPIE' (MGP) (PubMed:17785527). Binds to the SCR and MGP promoter sequences (PubMed:21935722). Controls position-dependent signals that regulate epidermal-cell-type patterning (PubMed:20356954).</text>
</comment>
<comment type="subunit">
    <text evidence="5 7 9 11">Interacts with SHR, SCR, MGP and itself (PubMed:17785527, PubMed:28211915). The heterodimer with SHR involves its zinc fingers (PubMed:28211915). Interacts with SIEL (PubMed:21924907). Binds to RGA and SCL3 competitively in the nucleus (PubMed:24821766).</text>
</comment>
<comment type="interaction">
    <interactant intactId="EBI-1568562">
        <id>Q700D2</id>
    </interactant>
    <interactant intactId="EBI-1568600">
        <id>Q9ZWA6</id>
        <label>MGP</label>
    </interactant>
    <organismsDiffer>false</organismsDiffer>
    <experiments>3</experiments>
</comment>
<comment type="subcellular location">
    <subcellularLocation>
        <location evidence="3 5 9 10">Nucleus</location>
    </subcellularLocation>
</comment>
<comment type="tissue specificity">
    <text evidence="5">Expressed in the quiescent center, the ground tissue stem cells and to a lesser extent in mature cortex and endodermis cells.</text>
</comment>
<comment type="developmental stage">
    <text evidence="5">Start to accumulate during the 16- to 32-cell stage of embryogenesis.</text>
</comment>
<comment type="induction">
    <text evidence="8">Not regulated by SCR and SHR.</text>
</comment>
<comment type="disruption phenotype">
    <text evidence="10">Ectopic divisions in the ground tissue (GT) region leading to an additional layer at the root pole of mature embryos and seedlings and associated with increased numbers of cells in the circumference within each root layer. Impaired SCR expression in the quiescent center (QC). A low level of SHR moves one extra layer outward from the endodermis, correlating with ectopic divisions in the cortex. This phenotype is stronger in the double mutant jkd bib, thus resulting in roots with wider meristems and additional layers between the central stele and the epidermis as well as an increased cell number per layer leading to unclear morphological tissue distinctions; in root meristems, only a dynamic subset of layers expresses SCR, restricted to the stele-adjacent layer at the root pole, and specific to ectopic dividing tissues. In the double mutant, SHR accumulates in the expanded inner vascular tissue and in all surrounding cell layers, including epidermis, with inefficient nuclear retention. The quadruple mutant line jkd mgp nuc scr has short root meristems, lacks endodermis and miss Casparian strip.</text>
</comment>
<comment type="miscellaneous">
    <text>Early initiation of expression in ground tissue is SHR- and SCR-independent but later maintenance becomes dependent on both.</text>
</comment>
<comment type="sequence caution" evidence="15">
    <conflict type="erroneous gene model prediction">
        <sequence resource="EMBL-CDS" id="BAB08375"/>
    </conflict>
</comment>
<comment type="sequence caution" evidence="15">
    <conflict type="erroneous gene model prediction">
        <sequence resource="EMBL-CDS" id="CAB86082"/>
    </conflict>
</comment>
<evidence type="ECO:0000250" key="1">
    <source>
        <dbReference type="UniProtKB" id="Q8GYC1"/>
    </source>
</evidence>
<evidence type="ECO:0000255" key="2">
    <source>
        <dbReference type="PROSITE-ProRule" id="PRU00042"/>
    </source>
</evidence>
<evidence type="ECO:0000255" key="3">
    <source>
        <dbReference type="PROSITE-ProRule" id="PRU00768"/>
    </source>
</evidence>
<evidence type="ECO:0000256" key="4">
    <source>
        <dbReference type="SAM" id="MobiDB-lite"/>
    </source>
</evidence>
<evidence type="ECO:0000269" key="5">
    <source>
    </source>
</evidence>
<evidence type="ECO:0000269" key="6">
    <source>
    </source>
</evidence>
<evidence type="ECO:0000269" key="7">
    <source>
    </source>
</evidence>
<evidence type="ECO:0000269" key="8">
    <source>
    </source>
</evidence>
<evidence type="ECO:0000269" key="9">
    <source>
    </source>
</evidence>
<evidence type="ECO:0000269" key="10">
    <source>
    </source>
</evidence>
<evidence type="ECO:0000269" key="11">
    <source>
    </source>
</evidence>
<evidence type="ECO:0000303" key="12">
    <source>
    </source>
</evidence>
<evidence type="ECO:0000303" key="13">
    <source>
    </source>
</evidence>
<evidence type="ECO:0000303" key="14">
    <source ref="2"/>
</evidence>
<evidence type="ECO:0000305" key="15"/>
<evidence type="ECO:0000312" key="16">
    <source>
        <dbReference type="Araport" id="AT5G03150"/>
    </source>
</evidence>
<evidence type="ECO:0000312" key="17">
    <source>
        <dbReference type="EMBL" id="BAB08375.1"/>
    </source>
</evidence>
<evidence type="ECO:0000312" key="18">
    <source>
        <dbReference type="EMBL" id="CAB86082.1"/>
    </source>
</evidence>
<evidence type="ECO:0007744" key="19">
    <source>
        <dbReference type="PDB" id="5B3H"/>
    </source>
</evidence>
<evidence type="ECO:0007829" key="20">
    <source>
        <dbReference type="PDB" id="5B3H"/>
    </source>
</evidence>
<evidence type="ECO:0007829" key="21">
    <source>
        <dbReference type="PDB" id="6KPB"/>
    </source>
</evidence>
<dbReference type="EMBL" id="AY568665">
    <property type="protein sequence ID" value="AAS79555.1"/>
    <property type="molecule type" value="mRNA"/>
</dbReference>
<dbReference type="EMBL" id="AJ630493">
    <property type="protein sequence ID" value="CAG25866.1"/>
    <property type="molecule type" value="mRNA"/>
</dbReference>
<dbReference type="EMBL" id="AJ621494">
    <property type="protein sequence ID" value="CAF18563.1"/>
    <property type="molecule type" value="mRNA"/>
</dbReference>
<dbReference type="EMBL" id="AB005240">
    <property type="protein sequence ID" value="BAB08375.1"/>
    <property type="status" value="ALT_SEQ"/>
    <property type="molecule type" value="Genomic_DNA"/>
</dbReference>
<dbReference type="EMBL" id="AL163002">
    <property type="protein sequence ID" value="CAB86082.1"/>
    <property type="status" value="ALT_SEQ"/>
    <property type="molecule type" value="Genomic_DNA"/>
</dbReference>
<dbReference type="EMBL" id="CP002688">
    <property type="protein sequence ID" value="AED90561.1"/>
    <property type="molecule type" value="Genomic_DNA"/>
</dbReference>
<dbReference type="EMBL" id="AK228895">
    <property type="protein sequence ID" value="BAF00785.1"/>
    <property type="molecule type" value="mRNA"/>
</dbReference>
<dbReference type="PIR" id="T48336">
    <property type="entry name" value="T48336"/>
</dbReference>
<dbReference type="RefSeq" id="NP_195935.2">
    <property type="nucleotide sequence ID" value="NM_120393.6"/>
</dbReference>
<dbReference type="PDB" id="5B3H">
    <property type="method" value="X-ray"/>
    <property type="resolution" value="2.70 A"/>
    <property type="chains" value="C/F=155-224"/>
</dbReference>
<dbReference type="PDB" id="6KPB">
    <property type="method" value="X-ray"/>
    <property type="resolution" value="2.40 A"/>
    <property type="chains" value="B=367-383"/>
</dbReference>
<dbReference type="PDBsum" id="5B3H"/>
<dbReference type="PDBsum" id="6KPB"/>
<dbReference type="SMR" id="Q700D2"/>
<dbReference type="BioGRID" id="17195">
    <property type="interactions" value="2"/>
</dbReference>
<dbReference type="FunCoup" id="Q700D2">
    <property type="interactions" value="231"/>
</dbReference>
<dbReference type="IntAct" id="Q700D2">
    <property type="interactions" value="3"/>
</dbReference>
<dbReference type="STRING" id="3702.Q700D2"/>
<dbReference type="GlyGen" id="Q700D2">
    <property type="glycosylation" value="3 sites, 1 O-linked glycan (3 sites)"/>
</dbReference>
<dbReference type="iPTMnet" id="Q700D2"/>
<dbReference type="PaxDb" id="3702-AT5G03150.1"/>
<dbReference type="ProteomicsDB" id="228775"/>
<dbReference type="EnsemblPlants" id="AT5G03150.1">
    <property type="protein sequence ID" value="AT5G03150.1"/>
    <property type="gene ID" value="AT5G03150"/>
</dbReference>
<dbReference type="GeneID" id="831919"/>
<dbReference type="Gramene" id="AT5G03150.1">
    <property type="protein sequence ID" value="AT5G03150.1"/>
    <property type="gene ID" value="AT5G03150"/>
</dbReference>
<dbReference type="KEGG" id="ath:AT5G03150"/>
<dbReference type="Araport" id="AT5G03150"/>
<dbReference type="TAIR" id="AT5G03150">
    <property type="gene designation" value="JKD"/>
</dbReference>
<dbReference type="eggNOG" id="KOG1721">
    <property type="taxonomic scope" value="Eukaryota"/>
</dbReference>
<dbReference type="HOGENOM" id="CLU_014578_3_1_1"/>
<dbReference type="InParanoid" id="Q700D2"/>
<dbReference type="OMA" id="FFAGPTM"/>
<dbReference type="OrthoDB" id="6354171at2759"/>
<dbReference type="PhylomeDB" id="Q700D2"/>
<dbReference type="PRO" id="PR:Q700D2"/>
<dbReference type="Proteomes" id="UP000006548">
    <property type="component" value="Chromosome 5"/>
</dbReference>
<dbReference type="ExpressionAtlas" id="Q700D2">
    <property type="expression patterns" value="baseline and differential"/>
</dbReference>
<dbReference type="GO" id="GO:0005634">
    <property type="term" value="C:nucleus"/>
    <property type="evidence" value="ECO:0000314"/>
    <property type="project" value="UniProtKB"/>
</dbReference>
<dbReference type="GO" id="GO:0003677">
    <property type="term" value="F:DNA binding"/>
    <property type="evidence" value="ECO:0000314"/>
    <property type="project" value="UniProtKB"/>
</dbReference>
<dbReference type="GO" id="GO:0003700">
    <property type="term" value="F:DNA-binding transcription factor activity"/>
    <property type="evidence" value="ECO:0000314"/>
    <property type="project" value="UniProtKB"/>
</dbReference>
<dbReference type="GO" id="GO:0042803">
    <property type="term" value="F:protein homodimerization activity"/>
    <property type="evidence" value="ECO:0000353"/>
    <property type="project" value="TAIR"/>
</dbReference>
<dbReference type="GO" id="GO:0043565">
    <property type="term" value="F:sequence-specific DNA binding"/>
    <property type="evidence" value="ECO:0000314"/>
    <property type="project" value="UniProtKB"/>
</dbReference>
<dbReference type="GO" id="GO:0008270">
    <property type="term" value="F:zinc ion binding"/>
    <property type="evidence" value="ECO:0007669"/>
    <property type="project" value="UniProtKB-KW"/>
</dbReference>
<dbReference type="GO" id="GO:0008356">
    <property type="term" value="P:asymmetric cell division"/>
    <property type="evidence" value="ECO:0000315"/>
    <property type="project" value="TAIR"/>
</dbReference>
<dbReference type="GO" id="GO:0045893">
    <property type="term" value="P:positive regulation of DNA-templated transcription"/>
    <property type="evidence" value="ECO:0000314"/>
    <property type="project" value="UniProtKB"/>
</dbReference>
<dbReference type="GO" id="GO:0034504">
    <property type="term" value="P:protein localization to nucleus"/>
    <property type="evidence" value="ECO:0000315"/>
    <property type="project" value="UniProtKB"/>
</dbReference>
<dbReference type="GO" id="GO:0051302">
    <property type="term" value="P:regulation of cell division"/>
    <property type="evidence" value="ECO:0000315"/>
    <property type="project" value="TAIR"/>
</dbReference>
<dbReference type="GO" id="GO:0006355">
    <property type="term" value="P:regulation of DNA-templated transcription"/>
    <property type="evidence" value="ECO:0000304"/>
    <property type="project" value="TAIR"/>
</dbReference>
<dbReference type="GO" id="GO:0045604">
    <property type="term" value="P:regulation of epidermal cell differentiation"/>
    <property type="evidence" value="ECO:0000315"/>
    <property type="project" value="TAIR"/>
</dbReference>
<dbReference type="GO" id="GO:0010075">
    <property type="term" value="P:regulation of meristem growth"/>
    <property type="evidence" value="ECO:0000315"/>
    <property type="project" value="UniProtKB"/>
</dbReference>
<dbReference type="GO" id="GO:0048364">
    <property type="term" value="P:root development"/>
    <property type="evidence" value="ECO:0000315"/>
    <property type="project" value="TAIR"/>
</dbReference>
<dbReference type="FunFam" id="3.30.160.60:FF:000554">
    <property type="entry name" value="protein indeterminate-domain 12-like"/>
    <property type="match status" value="1"/>
</dbReference>
<dbReference type="FunFam" id="3.30.160.60:FF:000131">
    <property type="entry name" value="protein indeterminate-domain 5, chloroplastic-like"/>
    <property type="match status" value="1"/>
</dbReference>
<dbReference type="Gene3D" id="3.30.160.60">
    <property type="entry name" value="Classic Zinc Finger"/>
    <property type="match status" value="2"/>
</dbReference>
<dbReference type="InterPro" id="IPR055187">
    <property type="entry name" value="C2CH-3rd_BIRD-IDD"/>
</dbReference>
<dbReference type="InterPro" id="IPR055185">
    <property type="entry name" value="C2CH-4th_BIRD-IDD"/>
</dbReference>
<dbReference type="InterPro" id="IPR055186">
    <property type="entry name" value="C2H2-2nd_BIRD-IDD"/>
</dbReference>
<dbReference type="InterPro" id="IPR031140">
    <property type="entry name" value="IDD1-16"/>
</dbReference>
<dbReference type="InterPro" id="IPR036236">
    <property type="entry name" value="Znf_C2H2_sf"/>
</dbReference>
<dbReference type="InterPro" id="IPR013087">
    <property type="entry name" value="Znf_C2H2_type"/>
</dbReference>
<dbReference type="PANTHER" id="PTHR10593:SF231">
    <property type="entry name" value="PROTEIN INDETERMINATE-DOMAIN 13-RELATED"/>
    <property type="match status" value="1"/>
</dbReference>
<dbReference type="PANTHER" id="PTHR10593">
    <property type="entry name" value="SERINE/THREONINE-PROTEIN KINASE RIO"/>
    <property type="match status" value="1"/>
</dbReference>
<dbReference type="Pfam" id="PF22995">
    <property type="entry name" value="C2CH-3rd_BIRD-IDD"/>
    <property type="match status" value="1"/>
</dbReference>
<dbReference type="Pfam" id="PF22992">
    <property type="entry name" value="C2CH-4th_BIRD-IDD"/>
    <property type="match status" value="1"/>
</dbReference>
<dbReference type="Pfam" id="PF22996">
    <property type="entry name" value="C2H2-2nd_BIRD-IDD"/>
    <property type="match status" value="1"/>
</dbReference>
<dbReference type="Pfam" id="PF00096">
    <property type="entry name" value="zf-C2H2"/>
    <property type="match status" value="1"/>
</dbReference>
<dbReference type="SMART" id="SM00355">
    <property type="entry name" value="ZnF_C2H2"/>
    <property type="match status" value="3"/>
</dbReference>
<dbReference type="SUPFAM" id="SSF57667">
    <property type="entry name" value="beta-beta-alpha zinc fingers"/>
    <property type="match status" value="1"/>
</dbReference>
<dbReference type="PROSITE" id="PS00028">
    <property type="entry name" value="ZINC_FINGER_C2H2_1"/>
    <property type="match status" value="1"/>
</dbReference>
<dbReference type="PROSITE" id="PS50157">
    <property type="entry name" value="ZINC_FINGER_C2H2_2"/>
    <property type="match status" value="1"/>
</dbReference>